<dbReference type="EMBL" id="AK024061">
    <property type="protein sequence ID" value="BAG51259.1"/>
    <property type="status" value="ALT_INIT"/>
    <property type="molecule type" value="mRNA"/>
</dbReference>
<dbReference type="EMBL" id="AK093451">
    <property type="protein sequence ID" value="BAG52720.1"/>
    <property type="molecule type" value="mRNA"/>
</dbReference>
<dbReference type="EMBL" id="AK293028">
    <property type="protein sequence ID" value="BAF85717.1"/>
    <property type="molecule type" value="mRNA"/>
</dbReference>
<dbReference type="EMBL" id="AC135586">
    <property type="status" value="NOT_ANNOTATED_CDS"/>
    <property type="molecule type" value="Genomic_DNA"/>
</dbReference>
<dbReference type="EMBL" id="AC136467">
    <property type="status" value="NOT_ANNOTATED_CDS"/>
    <property type="molecule type" value="Genomic_DNA"/>
</dbReference>
<dbReference type="EMBL" id="BC001530">
    <property type="protein sequence ID" value="AAH01530.2"/>
    <property type="molecule type" value="mRNA"/>
</dbReference>
<dbReference type="EMBL" id="BC025347">
    <property type="protein sequence ID" value="AAH25347.1"/>
    <property type="molecule type" value="mRNA"/>
</dbReference>
<dbReference type="EMBL" id="BC043157">
    <property type="protein sequence ID" value="AAH43157.2"/>
    <property type="molecule type" value="mRNA"/>
</dbReference>
<dbReference type="EMBL" id="BC062373">
    <property type="protein sequence ID" value="AAH62373.1"/>
    <property type="molecule type" value="mRNA"/>
</dbReference>
<dbReference type="EMBL" id="BC082962">
    <property type="protein sequence ID" value="AAH82962.1"/>
    <property type="molecule type" value="mRNA"/>
</dbReference>
<dbReference type="EMBL" id="AB014592">
    <property type="protein sequence ID" value="BAA31667.1"/>
    <property type="molecule type" value="mRNA"/>
</dbReference>
<dbReference type="CCDS" id="CCDS41869.1">
    <molecule id="Q86XL3-1"/>
</dbReference>
<dbReference type="PIR" id="T00354">
    <property type="entry name" value="T00354"/>
</dbReference>
<dbReference type="RefSeq" id="NP_055929.1">
    <molecule id="Q86XL3-1"/>
    <property type="nucleotide sequence ID" value="NM_015114.3"/>
</dbReference>
<dbReference type="RefSeq" id="XP_011533089.1">
    <molecule id="Q86XL3-2"/>
    <property type="nucleotide sequence ID" value="XM_011534787.4"/>
</dbReference>
<dbReference type="RefSeq" id="XP_011533090.1">
    <molecule id="Q86XL3-2"/>
    <property type="nucleotide sequence ID" value="XM_011534788.2"/>
</dbReference>
<dbReference type="SMR" id="Q86XL3"/>
<dbReference type="BioGRID" id="116758">
    <property type="interactions" value="235"/>
</dbReference>
<dbReference type="FunCoup" id="Q86XL3">
    <property type="interactions" value="3845"/>
</dbReference>
<dbReference type="IntAct" id="Q86XL3">
    <property type="interactions" value="101"/>
</dbReference>
<dbReference type="MINT" id="Q86XL3"/>
<dbReference type="STRING" id="9606.ENSP00000350686"/>
<dbReference type="iPTMnet" id="Q86XL3"/>
<dbReference type="MetOSite" id="Q86XL3"/>
<dbReference type="PhosphoSitePlus" id="Q86XL3"/>
<dbReference type="SwissPalm" id="Q86XL3"/>
<dbReference type="BioMuta" id="ANKLE2"/>
<dbReference type="DMDM" id="269849748"/>
<dbReference type="jPOST" id="Q86XL3"/>
<dbReference type="MassIVE" id="Q86XL3"/>
<dbReference type="PaxDb" id="9606-ENSP00000350686"/>
<dbReference type="PeptideAtlas" id="Q86XL3"/>
<dbReference type="ProteomicsDB" id="1900"/>
<dbReference type="ProteomicsDB" id="70296">
    <molecule id="Q86XL3-1"/>
</dbReference>
<dbReference type="ProteomicsDB" id="70297">
    <molecule id="Q86XL3-2"/>
</dbReference>
<dbReference type="Pumba" id="Q86XL3"/>
<dbReference type="Antibodypedia" id="1225">
    <property type="antibodies" value="104 antibodies from 25 providers"/>
</dbReference>
<dbReference type="DNASU" id="23141"/>
<dbReference type="Ensembl" id="ENST00000357997.10">
    <molecule id="Q86XL3-1"/>
    <property type="protein sequence ID" value="ENSP00000350686.5"/>
    <property type="gene ID" value="ENSG00000176915.15"/>
</dbReference>
<dbReference type="Ensembl" id="ENST00000542282.5">
    <molecule id="Q86XL3-3"/>
    <property type="protein sequence ID" value="ENSP00000437807.1"/>
    <property type="gene ID" value="ENSG00000176915.15"/>
</dbReference>
<dbReference type="Ensembl" id="ENST00000542657.5">
    <molecule id="Q86XL3-3"/>
    <property type="protein sequence ID" value="ENSP00000438551.1"/>
    <property type="gene ID" value="ENSG00000176915.15"/>
</dbReference>
<dbReference type="GeneID" id="23141"/>
<dbReference type="KEGG" id="hsa:23141"/>
<dbReference type="MANE-Select" id="ENST00000357997.10">
    <property type="protein sequence ID" value="ENSP00000350686.5"/>
    <property type="RefSeq nucleotide sequence ID" value="NM_015114.3"/>
    <property type="RefSeq protein sequence ID" value="NP_055929.1"/>
</dbReference>
<dbReference type="UCSC" id="uc001ukx.3">
    <molecule id="Q86XL3-1"/>
    <property type="organism name" value="human"/>
</dbReference>
<dbReference type="AGR" id="HGNC:29101"/>
<dbReference type="CTD" id="23141"/>
<dbReference type="DisGeNET" id="23141"/>
<dbReference type="GeneCards" id="ANKLE2"/>
<dbReference type="HGNC" id="HGNC:29101">
    <property type="gene designation" value="ANKLE2"/>
</dbReference>
<dbReference type="HPA" id="ENSG00000176915">
    <property type="expression patterns" value="Low tissue specificity"/>
</dbReference>
<dbReference type="MalaCards" id="ANKLE2"/>
<dbReference type="MIM" id="616062">
    <property type="type" value="gene"/>
</dbReference>
<dbReference type="MIM" id="616681">
    <property type="type" value="phenotype"/>
</dbReference>
<dbReference type="neXtProt" id="NX_Q86XL3"/>
<dbReference type="OpenTargets" id="ENSG00000176915"/>
<dbReference type="Orphanet" id="2512">
    <property type="disease" value="Autosomal recessive primary microcephaly"/>
</dbReference>
<dbReference type="PharmGKB" id="PA162376532"/>
<dbReference type="VEuPathDB" id="HostDB:ENSG00000176915"/>
<dbReference type="eggNOG" id="ENOG502QQ4Z">
    <property type="taxonomic scope" value="Eukaryota"/>
</dbReference>
<dbReference type="GeneTree" id="ENSGT00390000016767"/>
<dbReference type="HOGENOM" id="CLU_017564_0_0_1"/>
<dbReference type="InParanoid" id="Q86XL3"/>
<dbReference type="OMA" id="EYLEDRC"/>
<dbReference type="OrthoDB" id="7446186at2759"/>
<dbReference type="PAN-GO" id="Q86XL3">
    <property type="GO annotations" value="4 GO annotations based on evolutionary models"/>
</dbReference>
<dbReference type="PhylomeDB" id="Q86XL3"/>
<dbReference type="TreeFam" id="TF317729"/>
<dbReference type="PathwayCommons" id="Q86XL3"/>
<dbReference type="Reactome" id="R-HSA-2995383">
    <property type="pathway name" value="Initiation of Nuclear Envelope (NE) Reformation"/>
</dbReference>
<dbReference type="Reactome" id="R-HSA-9013404">
    <property type="pathway name" value="RAC2 GTPase cycle"/>
</dbReference>
<dbReference type="Reactome" id="R-HSA-9013408">
    <property type="pathway name" value="RHOG GTPase cycle"/>
</dbReference>
<dbReference type="SignaLink" id="Q86XL3"/>
<dbReference type="SIGNOR" id="Q86XL3"/>
<dbReference type="BioGRID-ORCS" id="23141">
    <property type="hits" value="808 hits in 1164 CRISPR screens"/>
</dbReference>
<dbReference type="ChiTaRS" id="ANKLE2">
    <property type="organism name" value="human"/>
</dbReference>
<dbReference type="GenomeRNAi" id="23141"/>
<dbReference type="Pharos" id="Q86XL3">
    <property type="development level" value="Tbio"/>
</dbReference>
<dbReference type="PRO" id="PR:Q86XL3"/>
<dbReference type="Proteomes" id="UP000005640">
    <property type="component" value="Chromosome 12"/>
</dbReference>
<dbReference type="RNAct" id="Q86XL3">
    <property type="molecule type" value="protein"/>
</dbReference>
<dbReference type="Bgee" id="ENSG00000176915">
    <property type="expression patterns" value="Expressed in stromal cell of endometrium and 202 other cell types or tissues"/>
</dbReference>
<dbReference type="ExpressionAtlas" id="Q86XL3">
    <property type="expression patterns" value="baseline and differential"/>
</dbReference>
<dbReference type="GO" id="GO:0005783">
    <property type="term" value="C:endoplasmic reticulum"/>
    <property type="evidence" value="ECO:0000318"/>
    <property type="project" value="GO_Central"/>
</dbReference>
<dbReference type="GO" id="GO:0005789">
    <property type="term" value="C:endoplasmic reticulum membrane"/>
    <property type="evidence" value="ECO:0000314"/>
    <property type="project" value="UniProtKB"/>
</dbReference>
<dbReference type="GO" id="GO:0016020">
    <property type="term" value="C:membrane"/>
    <property type="evidence" value="ECO:0007005"/>
    <property type="project" value="UniProtKB"/>
</dbReference>
<dbReference type="GO" id="GO:0004860">
    <property type="term" value="F:protein kinase inhibitor activity"/>
    <property type="evidence" value="ECO:0000314"/>
    <property type="project" value="UniProtKB"/>
</dbReference>
<dbReference type="GO" id="GO:0051721">
    <property type="term" value="F:protein phosphatase 2A binding"/>
    <property type="evidence" value="ECO:0000314"/>
    <property type="project" value="UniProtKB"/>
</dbReference>
<dbReference type="GO" id="GO:0019888">
    <property type="term" value="F:protein phosphatase regulator activity"/>
    <property type="evidence" value="ECO:0000304"/>
    <property type="project" value="UniProtKB"/>
</dbReference>
<dbReference type="GO" id="GO:0051301">
    <property type="term" value="P:cell division"/>
    <property type="evidence" value="ECO:0007669"/>
    <property type="project" value="UniProtKB-KW"/>
</dbReference>
<dbReference type="GO" id="GO:0007417">
    <property type="term" value="P:central nervous system development"/>
    <property type="evidence" value="ECO:0000314"/>
    <property type="project" value="UniProtKB"/>
</dbReference>
<dbReference type="GO" id="GO:0007084">
    <property type="term" value="P:mitotic nuclear membrane reassembly"/>
    <property type="evidence" value="ECO:0000315"/>
    <property type="project" value="UniProtKB"/>
</dbReference>
<dbReference type="GO" id="GO:0043066">
    <property type="term" value="P:negative regulation of apoptotic process"/>
    <property type="evidence" value="ECO:0000314"/>
    <property type="project" value="UniProtKB"/>
</dbReference>
<dbReference type="GO" id="GO:0042326">
    <property type="term" value="P:negative regulation of phosphorylation"/>
    <property type="evidence" value="ECO:0000314"/>
    <property type="project" value="UniProtKB"/>
</dbReference>
<dbReference type="GO" id="GO:0050790">
    <property type="term" value="P:regulation of catalytic activity"/>
    <property type="evidence" value="ECO:0000304"/>
    <property type="project" value="UniProtKB"/>
</dbReference>
<dbReference type="CDD" id="cd12944">
    <property type="entry name" value="LEM_ANKL2"/>
    <property type="match status" value="1"/>
</dbReference>
<dbReference type="FunFam" id="1.25.40.20:FF:000072">
    <property type="entry name" value="Ankyrin repeat and LEM domain containing 2"/>
    <property type="match status" value="1"/>
</dbReference>
<dbReference type="FunFam" id="1.10.720.40:FF:000001">
    <property type="entry name" value="LEM domain containing 2, isoform CRA_a"/>
    <property type="match status" value="1"/>
</dbReference>
<dbReference type="Gene3D" id="1.10.720.40">
    <property type="match status" value="1"/>
</dbReference>
<dbReference type="Gene3D" id="1.25.40.20">
    <property type="entry name" value="Ankyrin repeat-containing domain"/>
    <property type="match status" value="1"/>
</dbReference>
<dbReference type="Gene3D" id="3.40.970.10">
    <property type="entry name" value="Ribonuclease H1, N-terminal domain"/>
    <property type="match status" value="1"/>
</dbReference>
<dbReference type="InterPro" id="IPR056237">
    <property type="entry name" value="ANKLE2_3rd"/>
</dbReference>
<dbReference type="InterPro" id="IPR002110">
    <property type="entry name" value="Ankyrin_rpt"/>
</dbReference>
<dbReference type="InterPro" id="IPR036770">
    <property type="entry name" value="Ankyrin_rpt-contain_sf"/>
</dbReference>
<dbReference type="InterPro" id="IPR011015">
    <property type="entry name" value="LEM/LEM-like_dom_sf"/>
</dbReference>
<dbReference type="InterPro" id="IPR035006">
    <property type="entry name" value="LEM_ANKL2"/>
</dbReference>
<dbReference type="InterPro" id="IPR003887">
    <property type="entry name" value="LEM_dom"/>
</dbReference>
<dbReference type="InterPro" id="IPR011320">
    <property type="entry name" value="RNase_H1_N"/>
</dbReference>
<dbReference type="InterPro" id="IPR037056">
    <property type="entry name" value="RNase_H1_N_sf"/>
</dbReference>
<dbReference type="PANTHER" id="PTHR12349">
    <property type="entry name" value="ANKYRIN REPEAT AND LEM DOMAIN-CONTAINING PROTEIN 2"/>
    <property type="match status" value="1"/>
</dbReference>
<dbReference type="PANTHER" id="PTHR12349:SF4">
    <property type="entry name" value="ANKYRIN REPEAT AND LEM DOMAIN-CONTAINING PROTEIN 2"/>
    <property type="match status" value="1"/>
</dbReference>
<dbReference type="Pfam" id="PF00023">
    <property type="entry name" value="Ank"/>
    <property type="match status" value="1"/>
</dbReference>
<dbReference type="Pfam" id="PF24567">
    <property type="entry name" value="ANKLE2_3rd"/>
    <property type="match status" value="1"/>
</dbReference>
<dbReference type="Pfam" id="PF01693">
    <property type="entry name" value="Cauli_VI"/>
    <property type="match status" value="1"/>
</dbReference>
<dbReference type="Pfam" id="PF03020">
    <property type="entry name" value="LEM"/>
    <property type="match status" value="1"/>
</dbReference>
<dbReference type="SUPFAM" id="SSF48403">
    <property type="entry name" value="Ankyrin repeat"/>
    <property type="match status" value="1"/>
</dbReference>
<dbReference type="SUPFAM" id="SSF63451">
    <property type="entry name" value="LEM domain"/>
    <property type="match status" value="1"/>
</dbReference>
<dbReference type="PROSITE" id="PS50954">
    <property type="entry name" value="LEM"/>
    <property type="match status" value="1"/>
</dbReference>
<keyword id="KW-0025">Alternative splicing</keyword>
<keyword id="KW-0040">ANK repeat</keyword>
<keyword id="KW-0131">Cell cycle</keyword>
<keyword id="KW-0132">Cell division</keyword>
<keyword id="KW-0225">Disease variant</keyword>
<keyword id="KW-0256">Endoplasmic reticulum</keyword>
<keyword id="KW-0472">Membrane</keyword>
<keyword id="KW-0498">Mitosis</keyword>
<keyword id="KW-0597">Phosphoprotein</keyword>
<keyword id="KW-0905">Primary microcephaly</keyword>
<keyword id="KW-1267">Proteomics identification</keyword>
<keyword id="KW-1185">Reference proteome</keyword>
<keyword id="KW-0735">Signal-anchor</keyword>
<keyword id="KW-0812">Transmembrane</keyword>
<keyword id="KW-1133">Transmembrane helix</keyword>
<evidence type="ECO:0000255" key="1"/>
<evidence type="ECO:0000255" key="2">
    <source>
        <dbReference type="PROSITE-ProRule" id="PRU00313"/>
    </source>
</evidence>
<evidence type="ECO:0000256" key="3">
    <source>
        <dbReference type="SAM" id="MobiDB-lite"/>
    </source>
</evidence>
<evidence type="ECO:0000269" key="4">
    <source>
    </source>
</evidence>
<evidence type="ECO:0000269" key="5">
    <source>
    </source>
</evidence>
<evidence type="ECO:0000269" key="6">
    <source>
    </source>
</evidence>
<evidence type="ECO:0000269" key="7">
    <source>
    </source>
</evidence>
<evidence type="ECO:0000269" key="8">
    <source>
    </source>
</evidence>
<evidence type="ECO:0000269" key="9">
    <source>
    </source>
</evidence>
<evidence type="ECO:0000269" key="10">
    <source>
    </source>
</evidence>
<evidence type="ECO:0000303" key="11">
    <source>
    </source>
</evidence>
<evidence type="ECO:0000303" key="12">
    <source>
    </source>
</evidence>
<evidence type="ECO:0000305" key="13"/>
<evidence type="ECO:0007744" key="14">
    <source>
    </source>
</evidence>
<evidence type="ECO:0007744" key="15">
    <source>
    </source>
</evidence>
<evidence type="ECO:0007744" key="16">
    <source>
    </source>
</evidence>
<evidence type="ECO:0007744" key="17">
    <source>
    </source>
</evidence>
<evidence type="ECO:0007744" key="18">
    <source>
    </source>
</evidence>
<accession>Q86XL3</accession>
<accession>A8KAG3</accession>
<accession>B3KN97</accession>
<accession>B3KSF8</accession>
<accession>O75176</accession>
<accession>Q6P6A5</accession>
<accession>Q8TAZ9</accession>
<accession>Q96DH4</accession>
<gene>
    <name type="primary">ANKLE2</name>
    <name type="synonym">KIAA0692</name>
    <name type="synonym">LEM4</name>
</gene>
<comment type="function">
    <text evidence="5 6 9">Involved in mitotic nuclear envelope reassembly by promoting dephosphorylation of BAF/BANF1 during mitotic exit (PubMed:22770216). Coordinates the control of BAF/BANF1 dephosphorylation by inhibiting VRK1 kinase and promoting dephosphorylation of BAF/BANF1 by protein phosphatase 2A (PP2A), thereby facilitating nuclear envelope assembly (PubMed:22770216). May regulate nuclear localization of VRK1 in non-dividing cells (PubMed:31735666). It is unclear whether it acts as a real PP2A regulatory subunit or whether it is involved in recruitment of the PP2A complex (PubMed:22770216). Involved in brain development (PubMed:25259927).</text>
</comment>
<comment type="subunit">
    <text evidence="5">Interacts with BAF/BANF1. Interacts with protein phosphatase 2A (PP2A) components PPP2C (PPP2CA or PPP2CB) and PPP2R1A.</text>
</comment>
<comment type="subunit">
    <text evidence="8">(Microbial infection) May interact with non-structural protein 4A/NS4A from Zika virus strains Mr-766 or French Polynesia 10087PF/2013; the interaction may inhibit ANKLE2 function and contribute to defects in brain development, such as microcephaly.</text>
</comment>
<comment type="interaction">
    <interactant intactId="EBI-1773621">
        <id>Q86XL3</id>
    </interactant>
    <interactant intactId="EBI-1006038">
        <id>Q6P2E9</id>
        <label>EDC4</label>
    </interactant>
    <organismsDiffer>false</organismsDiffer>
    <experiments>2</experiments>
</comment>
<comment type="interaction">
    <interactant intactId="EBI-1773621">
        <id>Q86XL3</id>
    </interactant>
    <interactant intactId="EBI-2414048">
        <id>Q19848</id>
        <label>vrk-1</label>
    </interactant>
    <organismsDiffer>true</organismsDiffer>
    <experiments>2</experiments>
</comment>
<comment type="subcellular location">
    <subcellularLocation>
        <location evidence="5">Endoplasmic reticulum membrane</location>
        <topology evidence="5">Single-pass type III membrane protein</topology>
    </subcellularLocation>
</comment>
<comment type="alternative products">
    <event type="alternative splicing"/>
    <isoform>
        <id>Q86XL3-1</id>
        <name>1</name>
        <sequence type="displayed"/>
    </isoform>
    <isoform>
        <id>Q86XL3-2</id>
        <name>2</name>
        <sequence type="described" ref="VSP_023574 VSP_023575"/>
    </isoform>
    <isoform>
        <id>Q86XL3-3</id>
        <name>3</name>
        <sequence type="described" ref="VSP_044173"/>
    </isoform>
</comment>
<comment type="disease" evidence="6 7 9">
    <disease id="DI-04594">
        <name>Microcephaly 16, primary, autosomal recessive</name>
        <acronym>MCPH16</acronym>
        <description>A form of microcephaly, a disease defined as a head circumference more than 3 standard deviations below the age, sex and ethnically matched mean. Brain weight is markedly reduced and the cerebral cortex is disproportionately small.</description>
        <dbReference type="MIM" id="616681"/>
    </disease>
    <text>The disease is caused by variants affecting the gene represented in this entry.</text>
</comment>
<comment type="similarity">
    <text evidence="13">Belongs to the ANKLE2 family.</text>
</comment>
<comment type="sequence caution" evidence="13">
    <conflict type="erroneous initiation">
        <sequence resource="EMBL-CDS" id="BAG51259"/>
    </conflict>
    <text>Truncated N-terminus.</text>
</comment>
<protein>
    <recommendedName>
        <fullName>Ankyrin repeat and LEM domain-containing protein 2</fullName>
    </recommendedName>
    <alternativeName>
        <fullName>LEM domain-containing protein 4</fullName>
    </alternativeName>
</protein>
<sequence>MLWPRLAAAEWAALAWELLGASVLLIAVRWLVRRLGPRPGGLGRSGTPVPPPSAAAAPASGEMTMDALLARLKLLNPDDLREEIVKAGLKCGPITSTTRFIFEKKLAQALLEQGGRLSSFYHHEAGVTALSQDPQRILKPAEGNPTDQAGFSEDRDFGYSVGLNPPEEEAVTSKTCSVPPSDTDTYRAGATASKEPPLYYGVCPVYEDVPARNERIYVYENKKEALQAVKMIKGSRFKAFSTREDAEKFARGICDYFPSPSKTSLPLSPVKTAPLFSNDRLKDGLCLSESETVNKERANSYKNPRTQDLTAKLRKAVEKGEEDTFSDLIWSNPRYLIGSGDNPTIVQEGCRYNVMHVAAKENQASICQLTLDVLENPDFMRLMYPDDDEAMLQKRIRYVVDLYLNTPDKMGYDTPLHFACKFGNADVVNVLSSHHLIVKNSRNKYDKTPEDVICERSKNKSVELKERIREYLKGHYYVPLLRAEETSSPVIGELWSPDQTAEASHVSRYGGSPRDPVLTLRAFAGPLSPAKAEDFRKLWKTPPREKAGFLHHVKKSDPERGFERVGRELAHELGYPWVEYWEFLGCFVDLSSQEGLQRLEEYLTQQEIGKKAQQETGEREASCRDKATTSGSNSISVRAFLDEDDMSLEEIKNRQNAARNNSPPTVGAFGHTRCSAFPLEQEADLIEAAEPGGPHSSRNGLCHPLNHSRTLAGKRPKAPRGEEAHLPPVSDLTVEFDKLNLQNIGRSVSKTPDESTKTKDQILTSRINAVERDLLEPSPADQLGNGHRRTESEMSARIAKMSLSPSSPRHEDQLEVTREPARRLFLFGEEPSKLDQDVLAALECADVDPHQFPAVHRWKSAVLCYSPSDRQSWPSPAVKGRFKSQLPDLSGPHSYSPGRNSVAGSNPAKPGLGSPGRYSPVHGSQLRRMARLAELAAL</sequence>
<reference key="1">
    <citation type="journal article" date="2004" name="Nat. Genet.">
        <title>Complete sequencing and characterization of 21,243 full-length human cDNAs.</title>
        <authorList>
            <person name="Ota T."/>
            <person name="Suzuki Y."/>
            <person name="Nishikawa T."/>
            <person name="Otsuki T."/>
            <person name="Sugiyama T."/>
            <person name="Irie R."/>
            <person name="Wakamatsu A."/>
            <person name="Hayashi K."/>
            <person name="Sato H."/>
            <person name="Nagai K."/>
            <person name="Kimura K."/>
            <person name="Makita H."/>
            <person name="Sekine M."/>
            <person name="Obayashi M."/>
            <person name="Nishi T."/>
            <person name="Shibahara T."/>
            <person name="Tanaka T."/>
            <person name="Ishii S."/>
            <person name="Yamamoto J."/>
            <person name="Saito K."/>
            <person name="Kawai Y."/>
            <person name="Isono Y."/>
            <person name="Nakamura Y."/>
            <person name="Nagahari K."/>
            <person name="Murakami K."/>
            <person name="Yasuda T."/>
            <person name="Iwayanagi T."/>
            <person name="Wagatsuma M."/>
            <person name="Shiratori A."/>
            <person name="Sudo H."/>
            <person name="Hosoiri T."/>
            <person name="Kaku Y."/>
            <person name="Kodaira H."/>
            <person name="Kondo H."/>
            <person name="Sugawara M."/>
            <person name="Takahashi M."/>
            <person name="Kanda K."/>
            <person name="Yokoi T."/>
            <person name="Furuya T."/>
            <person name="Kikkawa E."/>
            <person name="Omura Y."/>
            <person name="Abe K."/>
            <person name="Kamihara K."/>
            <person name="Katsuta N."/>
            <person name="Sato K."/>
            <person name="Tanikawa M."/>
            <person name="Yamazaki M."/>
            <person name="Ninomiya K."/>
            <person name="Ishibashi T."/>
            <person name="Yamashita H."/>
            <person name="Murakawa K."/>
            <person name="Fujimori K."/>
            <person name="Tanai H."/>
            <person name="Kimata M."/>
            <person name="Watanabe M."/>
            <person name="Hiraoka S."/>
            <person name="Chiba Y."/>
            <person name="Ishida S."/>
            <person name="Ono Y."/>
            <person name="Takiguchi S."/>
            <person name="Watanabe S."/>
            <person name="Yosida M."/>
            <person name="Hotuta T."/>
            <person name="Kusano J."/>
            <person name="Kanehori K."/>
            <person name="Takahashi-Fujii A."/>
            <person name="Hara H."/>
            <person name="Tanase T.-O."/>
            <person name="Nomura Y."/>
            <person name="Togiya S."/>
            <person name="Komai F."/>
            <person name="Hara R."/>
            <person name="Takeuchi K."/>
            <person name="Arita M."/>
            <person name="Imose N."/>
            <person name="Musashino K."/>
            <person name="Yuuki H."/>
            <person name="Oshima A."/>
            <person name="Sasaki N."/>
            <person name="Aotsuka S."/>
            <person name="Yoshikawa Y."/>
            <person name="Matsunawa H."/>
            <person name="Ichihara T."/>
            <person name="Shiohata N."/>
            <person name="Sano S."/>
            <person name="Moriya S."/>
            <person name="Momiyama H."/>
            <person name="Satoh N."/>
            <person name="Takami S."/>
            <person name="Terashima Y."/>
            <person name="Suzuki O."/>
            <person name="Nakagawa S."/>
            <person name="Senoh A."/>
            <person name="Mizoguchi H."/>
            <person name="Goto Y."/>
            <person name="Shimizu F."/>
            <person name="Wakebe H."/>
            <person name="Hishigaki H."/>
            <person name="Watanabe T."/>
            <person name="Sugiyama A."/>
            <person name="Takemoto M."/>
            <person name="Kawakami B."/>
            <person name="Yamazaki M."/>
            <person name="Watanabe K."/>
            <person name="Kumagai A."/>
            <person name="Itakura S."/>
            <person name="Fukuzumi Y."/>
            <person name="Fujimori Y."/>
            <person name="Komiyama M."/>
            <person name="Tashiro H."/>
            <person name="Tanigami A."/>
            <person name="Fujiwara T."/>
            <person name="Ono T."/>
            <person name="Yamada K."/>
            <person name="Fujii Y."/>
            <person name="Ozaki K."/>
            <person name="Hirao M."/>
            <person name="Ohmori Y."/>
            <person name="Kawabata A."/>
            <person name="Hikiji T."/>
            <person name="Kobatake N."/>
            <person name="Inagaki H."/>
            <person name="Ikema Y."/>
            <person name="Okamoto S."/>
            <person name="Okitani R."/>
            <person name="Kawakami T."/>
            <person name="Noguchi S."/>
            <person name="Itoh T."/>
            <person name="Shigeta K."/>
            <person name="Senba T."/>
            <person name="Matsumura K."/>
            <person name="Nakajima Y."/>
            <person name="Mizuno T."/>
            <person name="Morinaga M."/>
            <person name="Sasaki M."/>
            <person name="Togashi T."/>
            <person name="Oyama M."/>
            <person name="Hata H."/>
            <person name="Watanabe M."/>
            <person name="Komatsu T."/>
            <person name="Mizushima-Sugano J."/>
            <person name="Satoh T."/>
            <person name="Shirai Y."/>
            <person name="Takahashi Y."/>
            <person name="Nakagawa K."/>
            <person name="Okumura K."/>
            <person name="Nagase T."/>
            <person name="Nomura N."/>
            <person name="Kikuchi H."/>
            <person name="Masuho Y."/>
            <person name="Yamashita R."/>
            <person name="Nakai K."/>
            <person name="Yada T."/>
            <person name="Nakamura Y."/>
            <person name="Ohara O."/>
            <person name="Isogai T."/>
            <person name="Sugano S."/>
        </authorList>
    </citation>
    <scope>NUCLEOTIDE SEQUENCE [LARGE SCALE MRNA] (ISOFORM 3)</scope>
    <scope>NUCLEOTIDE SEQUENCE [LARGE SCALE MRNA] OF 409-938 (ISOFORM 1)</scope>
    <source>
        <tissue>Testis</tissue>
        <tissue>Uterus</tissue>
    </source>
</reference>
<reference key="2">
    <citation type="journal article" date="2006" name="Nature">
        <title>The finished DNA sequence of human chromosome 12.</title>
        <authorList>
            <person name="Scherer S.E."/>
            <person name="Muzny D.M."/>
            <person name="Buhay C.J."/>
            <person name="Chen R."/>
            <person name="Cree A."/>
            <person name="Ding Y."/>
            <person name="Dugan-Rocha S."/>
            <person name="Gill R."/>
            <person name="Gunaratne P."/>
            <person name="Harris R.A."/>
            <person name="Hawes A.C."/>
            <person name="Hernandez J."/>
            <person name="Hodgson A.V."/>
            <person name="Hume J."/>
            <person name="Jackson A."/>
            <person name="Khan Z.M."/>
            <person name="Kovar-Smith C."/>
            <person name="Lewis L.R."/>
            <person name="Lozado R.J."/>
            <person name="Metzker M.L."/>
            <person name="Milosavljevic A."/>
            <person name="Miner G.R."/>
            <person name="Montgomery K.T."/>
            <person name="Morgan M.B."/>
            <person name="Nazareth L.V."/>
            <person name="Scott G."/>
            <person name="Sodergren E."/>
            <person name="Song X.-Z."/>
            <person name="Steffen D."/>
            <person name="Lovering R.C."/>
            <person name="Wheeler D.A."/>
            <person name="Worley K.C."/>
            <person name="Yuan Y."/>
            <person name="Zhang Z."/>
            <person name="Adams C.Q."/>
            <person name="Ansari-Lari M.A."/>
            <person name="Ayele M."/>
            <person name="Brown M.J."/>
            <person name="Chen G."/>
            <person name="Chen Z."/>
            <person name="Clerc-Blankenburg K.P."/>
            <person name="Davis C."/>
            <person name="Delgado O."/>
            <person name="Dinh H.H."/>
            <person name="Draper H."/>
            <person name="Gonzalez-Garay M.L."/>
            <person name="Havlak P."/>
            <person name="Jackson L.R."/>
            <person name="Jacob L.S."/>
            <person name="Kelly S.H."/>
            <person name="Li L."/>
            <person name="Li Z."/>
            <person name="Liu J."/>
            <person name="Liu W."/>
            <person name="Lu J."/>
            <person name="Maheshwari M."/>
            <person name="Nguyen B.-V."/>
            <person name="Okwuonu G.O."/>
            <person name="Pasternak S."/>
            <person name="Perez L.M."/>
            <person name="Plopper F.J.H."/>
            <person name="Santibanez J."/>
            <person name="Shen H."/>
            <person name="Tabor P.E."/>
            <person name="Verduzco D."/>
            <person name="Waldron L."/>
            <person name="Wang Q."/>
            <person name="Williams G.A."/>
            <person name="Zhang J."/>
            <person name="Zhou J."/>
            <person name="Allen C.C."/>
            <person name="Amin A.G."/>
            <person name="Anyalebechi V."/>
            <person name="Bailey M."/>
            <person name="Barbaria J.A."/>
            <person name="Bimage K.E."/>
            <person name="Bryant N.P."/>
            <person name="Burch P.E."/>
            <person name="Burkett C.E."/>
            <person name="Burrell K.L."/>
            <person name="Calderon E."/>
            <person name="Cardenas V."/>
            <person name="Carter K."/>
            <person name="Casias K."/>
            <person name="Cavazos I."/>
            <person name="Cavazos S.R."/>
            <person name="Ceasar H."/>
            <person name="Chacko J."/>
            <person name="Chan S.N."/>
            <person name="Chavez D."/>
            <person name="Christopoulos C."/>
            <person name="Chu J."/>
            <person name="Cockrell R."/>
            <person name="Cox C.D."/>
            <person name="Dang M."/>
            <person name="Dathorne S.R."/>
            <person name="David R."/>
            <person name="Davis C.M."/>
            <person name="Davy-Carroll L."/>
            <person name="Deshazo D.R."/>
            <person name="Donlin J.E."/>
            <person name="D'Souza L."/>
            <person name="Eaves K.A."/>
            <person name="Egan A."/>
            <person name="Emery-Cohen A.J."/>
            <person name="Escotto M."/>
            <person name="Flagg N."/>
            <person name="Forbes L.D."/>
            <person name="Gabisi A.M."/>
            <person name="Garza M."/>
            <person name="Hamilton C."/>
            <person name="Henderson N."/>
            <person name="Hernandez O."/>
            <person name="Hines S."/>
            <person name="Hogues M.E."/>
            <person name="Huang M."/>
            <person name="Idlebird D.G."/>
            <person name="Johnson R."/>
            <person name="Jolivet A."/>
            <person name="Jones S."/>
            <person name="Kagan R."/>
            <person name="King L.M."/>
            <person name="Leal B."/>
            <person name="Lebow H."/>
            <person name="Lee S."/>
            <person name="LeVan J.M."/>
            <person name="Lewis L.C."/>
            <person name="London P."/>
            <person name="Lorensuhewa L.M."/>
            <person name="Loulseged H."/>
            <person name="Lovett D.A."/>
            <person name="Lucier A."/>
            <person name="Lucier R.L."/>
            <person name="Ma J."/>
            <person name="Madu R.C."/>
            <person name="Mapua P."/>
            <person name="Martindale A.D."/>
            <person name="Martinez E."/>
            <person name="Massey E."/>
            <person name="Mawhiney S."/>
            <person name="Meador M.G."/>
            <person name="Mendez S."/>
            <person name="Mercado C."/>
            <person name="Mercado I.C."/>
            <person name="Merritt C.E."/>
            <person name="Miner Z.L."/>
            <person name="Minja E."/>
            <person name="Mitchell T."/>
            <person name="Mohabbat F."/>
            <person name="Mohabbat K."/>
            <person name="Montgomery B."/>
            <person name="Moore N."/>
            <person name="Morris S."/>
            <person name="Munidasa M."/>
            <person name="Ngo R.N."/>
            <person name="Nguyen N.B."/>
            <person name="Nickerson E."/>
            <person name="Nwaokelemeh O.O."/>
            <person name="Nwokenkwo S."/>
            <person name="Obregon M."/>
            <person name="Oguh M."/>
            <person name="Oragunye N."/>
            <person name="Oviedo R.J."/>
            <person name="Parish B.J."/>
            <person name="Parker D.N."/>
            <person name="Parrish J."/>
            <person name="Parks K.L."/>
            <person name="Paul H.A."/>
            <person name="Payton B.A."/>
            <person name="Perez A."/>
            <person name="Perrin W."/>
            <person name="Pickens A."/>
            <person name="Primus E.L."/>
            <person name="Pu L.-L."/>
            <person name="Puazo M."/>
            <person name="Quiles M.M."/>
            <person name="Quiroz J.B."/>
            <person name="Rabata D."/>
            <person name="Reeves K."/>
            <person name="Ruiz S.J."/>
            <person name="Shao H."/>
            <person name="Sisson I."/>
            <person name="Sonaike T."/>
            <person name="Sorelle R.P."/>
            <person name="Sutton A.E."/>
            <person name="Svatek A.F."/>
            <person name="Svetz L.A."/>
            <person name="Tamerisa K.S."/>
            <person name="Taylor T.R."/>
            <person name="Teague B."/>
            <person name="Thomas N."/>
            <person name="Thorn R.D."/>
            <person name="Trejos Z.Y."/>
            <person name="Trevino B.K."/>
            <person name="Ukegbu O.N."/>
            <person name="Urban J.B."/>
            <person name="Vasquez L.I."/>
            <person name="Vera V.A."/>
            <person name="Villasana D.M."/>
            <person name="Wang L."/>
            <person name="Ward-Moore S."/>
            <person name="Warren J.T."/>
            <person name="Wei X."/>
            <person name="White F."/>
            <person name="Williamson A.L."/>
            <person name="Wleczyk R."/>
            <person name="Wooden H.S."/>
            <person name="Wooden S.H."/>
            <person name="Yen J."/>
            <person name="Yoon L."/>
            <person name="Yoon V."/>
            <person name="Zorrilla S.E."/>
            <person name="Nelson D."/>
            <person name="Kucherlapati R."/>
            <person name="Weinstock G."/>
            <person name="Gibbs R.A."/>
        </authorList>
    </citation>
    <scope>NUCLEOTIDE SEQUENCE [LARGE SCALE GENOMIC DNA]</scope>
</reference>
<reference key="3">
    <citation type="journal article" date="2004" name="Genome Res.">
        <title>The status, quality, and expansion of the NIH full-length cDNA project: the Mammalian Gene Collection (MGC).</title>
        <authorList>
            <consortium name="The MGC Project Team"/>
        </authorList>
    </citation>
    <scope>NUCLEOTIDE SEQUENCE [LARGE SCALE MRNA] (ISOFORM 1)</scope>
    <scope>NUCLEOTIDE SEQUENCE [LARGE SCALE MRNA] OF 208-938 (ISOFORM 2)</scope>
    <scope>VARIANTS TYR-122 AND HIS-720</scope>
    <source>
        <tissue>Brain</tissue>
        <tissue>Skin</tissue>
    </source>
</reference>
<reference key="4">
    <citation type="journal article" date="1998" name="DNA Res.">
        <title>Prediction of the coding sequences of unidentified human genes. X. The complete sequences of 100 new cDNA clones from brain which can code for large proteins in vitro.</title>
        <authorList>
            <person name="Ishikawa K."/>
            <person name="Nagase T."/>
            <person name="Suyama M."/>
            <person name="Miyajima N."/>
            <person name="Tanaka A."/>
            <person name="Kotani H."/>
            <person name="Nomura N."/>
            <person name="Ohara O."/>
        </authorList>
    </citation>
    <scope>NUCLEOTIDE SEQUENCE [LARGE SCALE MRNA] OF 156-938 (ISOFORM 1)</scope>
    <scope>VARIANT HIS-720</scope>
    <source>
        <tissue>Brain</tissue>
    </source>
</reference>
<reference key="5">
    <citation type="journal article" date="2008" name="J. Proteome Res.">
        <title>Combining protein-based IMAC, peptide-based IMAC, and MudPIT for efficient phosphoproteomic analysis.</title>
        <authorList>
            <person name="Cantin G.T."/>
            <person name="Yi W."/>
            <person name="Lu B."/>
            <person name="Park S.K."/>
            <person name="Xu T."/>
            <person name="Lee J.-D."/>
            <person name="Yates J.R. III"/>
        </authorList>
    </citation>
    <scope>IDENTIFICATION BY MASS SPECTROMETRY [LARGE SCALE ANALYSIS]</scope>
    <source>
        <tissue>Cervix carcinoma</tissue>
    </source>
</reference>
<reference key="6">
    <citation type="journal article" date="2008" name="Proc. Natl. Acad. Sci. U.S.A.">
        <title>A quantitative atlas of mitotic phosphorylation.</title>
        <authorList>
            <person name="Dephoure N."/>
            <person name="Zhou C."/>
            <person name="Villen J."/>
            <person name="Beausoleil S.A."/>
            <person name="Bakalarski C.E."/>
            <person name="Elledge S.J."/>
            <person name="Gygi S.P."/>
        </authorList>
    </citation>
    <scope>PHOSPHORYLATION [LARGE SCALE ANALYSIS] AT SER-259; SER-268; SER-488; SER-496; SER-512; SER-662; SER-896 AND SER-914</scope>
    <scope>IDENTIFICATION BY MASS SPECTROMETRY [LARGE SCALE ANALYSIS]</scope>
    <source>
        <tissue>Cervix carcinoma</tissue>
    </source>
</reference>
<reference key="7">
    <citation type="journal article" date="2009" name="Sci. Signal.">
        <title>Quantitative phosphoproteomic analysis of T cell receptor signaling reveals system-wide modulation of protein-protein interactions.</title>
        <authorList>
            <person name="Mayya V."/>
            <person name="Lundgren D.H."/>
            <person name="Hwang S.-I."/>
            <person name="Rezaul K."/>
            <person name="Wu L."/>
            <person name="Eng J.K."/>
            <person name="Rodionov V."/>
            <person name="Han D.K."/>
        </authorList>
    </citation>
    <scope>IDENTIFICATION BY MASS SPECTROMETRY [LARGE SCALE ANALYSIS]</scope>
    <source>
        <tissue>Leukemic T-cell</tissue>
    </source>
</reference>
<reference key="8">
    <citation type="journal article" date="2010" name="Sci. Signal.">
        <title>Quantitative phosphoproteomics reveals widespread full phosphorylation site occupancy during mitosis.</title>
        <authorList>
            <person name="Olsen J.V."/>
            <person name="Vermeulen M."/>
            <person name="Santamaria A."/>
            <person name="Kumar C."/>
            <person name="Miller M.L."/>
            <person name="Jensen L.J."/>
            <person name="Gnad F."/>
            <person name="Cox J."/>
            <person name="Jensen T.S."/>
            <person name="Nigg E.A."/>
            <person name="Brunak S."/>
            <person name="Mann M."/>
        </authorList>
    </citation>
    <scope>PHOSPHORYLATION [LARGE SCALE ANALYSIS] AT SER-496 AND SER-662</scope>
    <scope>IDENTIFICATION BY MASS SPECTROMETRY [LARGE SCALE ANALYSIS]</scope>
    <source>
        <tissue>Cervix carcinoma</tissue>
    </source>
</reference>
<reference key="9">
    <citation type="journal article" date="2011" name="BMC Syst. Biol.">
        <title>Initial characterization of the human central proteome.</title>
        <authorList>
            <person name="Burkard T.R."/>
            <person name="Planyavsky M."/>
            <person name="Kaupe I."/>
            <person name="Breitwieser F.P."/>
            <person name="Buerckstuemmer T."/>
            <person name="Bennett K.L."/>
            <person name="Superti-Furga G."/>
            <person name="Colinge J."/>
        </authorList>
    </citation>
    <scope>IDENTIFICATION BY MASS SPECTROMETRY [LARGE SCALE ANALYSIS]</scope>
</reference>
<reference key="10">
    <citation type="journal article" date="2011" name="Sci. Signal.">
        <title>System-wide temporal characterization of the proteome and phosphoproteome of human embryonic stem cell differentiation.</title>
        <authorList>
            <person name="Rigbolt K.T."/>
            <person name="Prokhorova T.A."/>
            <person name="Akimov V."/>
            <person name="Henningsen J."/>
            <person name="Johansen P.T."/>
            <person name="Kratchmarova I."/>
            <person name="Kassem M."/>
            <person name="Mann M."/>
            <person name="Olsen J.V."/>
            <person name="Blagoev B."/>
        </authorList>
    </citation>
    <scope>PHOSPHORYLATION [LARGE SCALE ANALYSIS] AT SER-662</scope>
    <scope>IDENTIFICATION BY MASS SPECTROMETRY [LARGE SCALE ANALYSIS]</scope>
</reference>
<reference key="11">
    <citation type="journal article" date="2012" name="Cell">
        <title>Coordination of kinase and phosphatase activities by Lem4 enables nuclear envelope reassembly during mitosis.</title>
        <authorList>
            <person name="Asencio C."/>
            <person name="Davidson I.F."/>
            <person name="Santarella-Mellwig R."/>
            <person name="Ly-Hartig T.B."/>
            <person name="Mall M."/>
            <person name="Wallenfang M.R."/>
            <person name="Mattaj I.W."/>
            <person name="Gorjanacz M."/>
        </authorList>
    </citation>
    <scope>FUNCTION</scope>
    <scope>SUBCELLULAR LOCATION</scope>
    <scope>TOPOLOGY</scope>
    <scope>INTERACTION WITH BANF1 AND PROTEIN PHOSPHATASE 2A</scope>
</reference>
<reference key="12">
    <citation type="journal article" date="2013" name="J. Proteome Res.">
        <title>Toward a comprehensive characterization of a human cancer cell phosphoproteome.</title>
        <authorList>
            <person name="Zhou H."/>
            <person name="Di Palma S."/>
            <person name="Preisinger C."/>
            <person name="Peng M."/>
            <person name="Polat A.N."/>
            <person name="Heck A.J."/>
            <person name="Mohammed S."/>
        </authorList>
    </citation>
    <scope>PHOSPHORYLATION [LARGE SCALE ANALYSIS] AT SER-268; SER-496; SER-512; SER-528; SER-662 AND SER-804</scope>
    <scope>IDENTIFICATION BY MASS SPECTROMETRY [LARGE SCALE ANALYSIS]</scope>
    <source>
        <tissue>Cervix carcinoma</tissue>
        <tissue>Erythroleukemia</tissue>
    </source>
</reference>
<reference key="13">
    <citation type="journal article" date="2014" name="Cell">
        <title>A drosophila genetic resource of mutants to study mechanisms underlying human genetic diseases.</title>
        <authorList>
            <person name="Yamamoto S."/>
            <person name="Jaiswal M."/>
            <person name="Charng W.L."/>
            <person name="Gambin T."/>
            <person name="Karaca E."/>
            <person name="Mirzaa G."/>
            <person name="Wiszniewski W."/>
            <person name="Sandoval H."/>
            <person name="Haelterman N.A."/>
            <person name="Xiong B."/>
            <person name="Zhang K."/>
            <person name="Bayat V."/>
            <person name="David G."/>
            <person name="Li T."/>
            <person name="Chen K."/>
            <person name="Gala U."/>
            <person name="Harel T."/>
            <person name="Pehlivan D."/>
            <person name="Penney S."/>
            <person name="Vissers L.E."/>
            <person name="de Ligt J."/>
            <person name="Jhangiani S.N."/>
            <person name="Xie Y."/>
            <person name="Tsang S.H."/>
            <person name="Parman Y."/>
            <person name="Sivaci M."/>
            <person name="Battaloglu E."/>
            <person name="Muzny D."/>
            <person name="Wan Y.W."/>
            <person name="Liu Z."/>
            <person name="Lin-Moore A.T."/>
            <person name="Clark R.D."/>
            <person name="Curry C.J."/>
            <person name="Link N."/>
            <person name="Schulze K.L."/>
            <person name="Boerwinkle E."/>
            <person name="Dobyns W.B."/>
            <person name="Allikmets R."/>
            <person name="Gibbs R.A."/>
            <person name="Chen R."/>
            <person name="Lupski J.R."/>
            <person name="Wangler M.F."/>
            <person name="Bellen H.J."/>
        </authorList>
    </citation>
    <scope>INVOLVEMENT IN MCPH16</scope>
    <scope>VARIANTS MCPH16 VAL-573 AND 782-GLN--LEU-938 DEL</scope>
    <scope>FUNCTION</scope>
</reference>
<reference key="14">
    <citation type="journal article" date="2014" name="J. Proteomics">
        <title>An enzyme assisted RP-RPLC approach for in-depth analysis of human liver phosphoproteome.</title>
        <authorList>
            <person name="Bian Y."/>
            <person name="Song C."/>
            <person name="Cheng K."/>
            <person name="Dong M."/>
            <person name="Wang F."/>
            <person name="Huang J."/>
            <person name="Sun D."/>
            <person name="Wang L."/>
            <person name="Ye M."/>
            <person name="Zou H."/>
        </authorList>
    </citation>
    <scope>PHOSPHORYLATION [LARGE SCALE ANALYSIS] AT SER-528</scope>
    <scope>IDENTIFICATION BY MASS SPECTROMETRY [LARGE SCALE ANALYSIS]</scope>
    <source>
        <tissue>Liver</tissue>
    </source>
</reference>
<reference key="15">
    <citation type="journal article" date="2018" name="Cell">
        <title>Comparative Flavivirus-Host Protein Interaction Mapping Reveals Mechanisms of Dengue and Zika Virus Pathogenesis.</title>
        <authorList>
            <person name="Shah P.S."/>
            <person name="Link N."/>
            <person name="Jang G.M."/>
            <person name="Sharp P.P."/>
            <person name="Zhu T."/>
            <person name="Swaney D.L."/>
            <person name="Johnson J.R."/>
            <person name="Von Dollen J."/>
            <person name="Ramage H.R."/>
            <person name="Satkamp L."/>
            <person name="Newton B."/>
            <person name="Huettenhain R."/>
            <person name="Petit M.J."/>
            <person name="Baum T."/>
            <person name="Everitt A."/>
            <person name="Laufman O."/>
            <person name="Tassetto M."/>
            <person name="Shales M."/>
            <person name="Stevenson E."/>
            <person name="Iglesias G.N."/>
            <person name="Shokat L."/>
            <person name="Tripathi S."/>
            <person name="Balasubramaniam V."/>
            <person name="Webb L.G."/>
            <person name="Aguirre S."/>
            <person name="Willsey A.J."/>
            <person name="Garcia-Sastre A."/>
            <person name="Pollard K.S."/>
            <person name="Cherry S."/>
            <person name="Gamarnik A.V."/>
            <person name="Marazzi I."/>
            <person name="Taunton J."/>
            <person name="Fernandez-Sesma A."/>
            <person name="Bellen H.J."/>
            <person name="Andino R."/>
            <person name="Krogan N.J."/>
        </authorList>
    </citation>
    <scope>INTERACTION WITH ZIKA VIRUS MR-766 NS4A AND ZIKA VIRUS FRENCH POLYNESIA 10087PF 2013 NS4A</scope>
</reference>
<reference key="16">
    <citation type="journal article" date="2019" name="Dev. Cell">
        <title>Mutations in ANKLE2, a ZIKA Virus Target, Disrupt an Asymmetric Cell Division Pathway in Drosophila Neuroblasts to Cause Microcephaly.</title>
        <authorList>
            <person name="Link N."/>
            <person name="Chung H."/>
            <person name="Jolly A."/>
            <person name="Withers M."/>
            <person name="Tepe B."/>
            <person name="Arenkiel B.R."/>
            <person name="Shah P.S."/>
            <person name="Krogan N.J."/>
            <person name="Aydin H."/>
            <person name="Geckinli B.B."/>
            <person name="Tos T."/>
            <person name="Isikay S."/>
            <person name="Tuysuz B."/>
            <person name="Mochida G.H."/>
            <person name="Thomas A.X."/>
            <person name="Clark R.D."/>
            <person name="Mirzaa G.M."/>
            <person name="Lupski J.R."/>
            <person name="Bellen H.J."/>
        </authorList>
    </citation>
    <scope>FUNCTION</scope>
    <scope>VARIANTS MCPH16 VAL-8; GLY-27; PRO-109; TRP-201; GLY-229; 236-ARG--LEU-938 DEL; CYS-536; VAL-573 AND 782-GLN--LEU-938 DEL</scope>
    <scope>CHARACTERIZATION OF VARIANT MCPH16 GLY-229</scope>
</reference>
<reference key="17">
    <citation type="journal article" date="2019" name="Genet. Med.">
        <title>Genomic and phenotypic delineation of congenital microcephaly.</title>
        <authorList>
            <person name="Shaheen R."/>
            <person name="Maddirevula S."/>
            <person name="Ewida N."/>
            <person name="Alsahli S."/>
            <person name="Abdel-Salam G.M.H."/>
            <person name="Zaki M.S."/>
            <person name="Tala S.A."/>
            <person name="Alhashem A."/>
            <person name="Softah A."/>
            <person name="Al-Owain M."/>
            <person name="Alazami A.M."/>
            <person name="Abadel B."/>
            <person name="Patel N."/>
            <person name="Al-Sheddi T."/>
            <person name="Alomar R."/>
            <person name="Alobeid E."/>
            <person name="Ibrahim N."/>
            <person name="Hashem M."/>
            <person name="Abdulwahab F."/>
            <person name="Hamad M."/>
            <person name="Tabarki B."/>
            <person name="Alwadei A.H."/>
            <person name="Alhazzani F."/>
            <person name="Bashiri F.A."/>
            <person name="Kentab A."/>
            <person name="Sahintuerk S."/>
            <person name="Sherr E."/>
            <person name="Fregeau B."/>
            <person name="Sogati S."/>
            <person name="Alshahwan S.A.M."/>
            <person name="Alkhalifi S."/>
            <person name="Alhumaidi Z."/>
            <person name="Temtamy S."/>
            <person name="Aglan M."/>
            <person name="Otaify G."/>
            <person name="Girisha K.M."/>
            <person name="Tulbah M."/>
            <person name="Seidahmed M.Z."/>
            <person name="Salih M.A."/>
            <person name="Abouelhoda M."/>
            <person name="Momin A.A."/>
            <person name="Saffar M.A."/>
            <person name="Partlow J.N."/>
            <person name="Arold S.T."/>
            <person name="Faqeih E."/>
            <person name="Walsh C."/>
            <person name="Alkuraya F.S."/>
        </authorList>
    </citation>
    <scope>VARIANTS MCPH16 PRO-109 AND VAL-585</scope>
</reference>
<proteinExistence type="evidence at protein level"/>
<organism>
    <name type="scientific">Homo sapiens</name>
    <name type="common">Human</name>
    <dbReference type="NCBI Taxonomy" id="9606"/>
    <lineage>
        <taxon>Eukaryota</taxon>
        <taxon>Metazoa</taxon>
        <taxon>Chordata</taxon>
        <taxon>Craniata</taxon>
        <taxon>Vertebrata</taxon>
        <taxon>Euteleostomi</taxon>
        <taxon>Mammalia</taxon>
        <taxon>Eutheria</taxon>
        <taxon>Euarchontoglires</taxon>
        <taxon>Primates</taxon>
        <taxon>Haplorrhini</taxon>
        <taxon>Catarrhini</taxon>
        <taxon>Hominidae</taxon>
        <taxon>Homo</taxon>
    </lineage>
</organism>
<name>ANKL2_HUMAN</name>
<feature type="chain" id="PRO_0000280242" description="Ankyrin repeat and LEM domain-containing protein 2">
    <location>
        <begin position="1"/>
        <end position="938"/>
    </location>
</feature>
<feature type="topological domain" description="Lumenal" evidence="1">
    <location>
        <begin position="1"/>
        <end position="12"/>
    </location>
</feature>
<feature type="transmembrane region" description="Helical; Signal-anchor for type III membrane protein" evidence="1">
    <location>
        <begin position="13"/>
        <end position="32"/>
    </location>
</feature>
<feature type="topological domain" description="Cytoplasmic" evidence="1">
    <location>
        <begin position="33"/>
        <end position="938"/>
    </location>
</feature>
<feature type="domain" description="LEM" evidence="2">
    <location>
        <begin position="69"/>
        <end position="113"/>
    </location>
</feature>
<feature type="repeat" description="ANK">
    <location>
        <begin position="411"/>
        <end position="440"/>
    </location>
</feature>
<feature type="region of interest" description="Disordered" evidence="3">
    <location>
        <begin position="609"/>
        <end position="636"/>
    </location>
</feature>
<feature type="region of interest" description="Disordered" evidence="3">
    <location>
        <begin position="870"/>
        <end position="924"/>
    </location>
</feature>
<feature type="compositionally biased region" description="Basic and acidic residues" evidence="3">
    <location>
        <begin position="609"/>
        <end position="627"/>
    </location>
</feature>
<feature type="modified residue" description="Phosphoserine" evidence="14">
    <location>
        <position position="259"/>
    </location>
</feature>
<feature type="modified residue" description="Phosphoserine" evidence="14 17">
    <location>
        <position position="268"/>
    </location>
</feature>
<feature type="modified residue" description="Phosphoserine" evidence="14">
    <location>
        <position position="488"/>
    </location>
</feature>
<feature type="modified residue" description="Phosphoserine" evidence="14 15 17">
    <location>
        <position position="496"/>
    </location>
</feature>
<feature type="modified residue" description="Phosphoserine" evidence="14 17">
    <location>
        <position position="512"/>
    </location>
</feature>
<feature type="modified residue" description="Phosphoserine" evidence="17 18">
    <location>
        <position position="528"/>
    </location>
</feature>
<feature type="modified residue" description="Phosphoserine" evidence="14 15 16 17">
    <location>
        <position position="662"/>
    </location>
</feature>
<feature type="modified residue" description="Phosphoserine" evidence="17">
    <location>
        <position position="804"/>
    </location>
</feature>
<feature type="modified residue" description="Phosphoserine" evidence="14">
    <location>
        <position position="896"/>
    </location>
</feature>
<feature type="modified residue" description="Phosphoserine" evidence="14">
    <location>
        <position position="914"/>
    </location>
</feature>
<feature type="splice variant" id="VSP_044173" description="In isoform 3." evidence="11">
    <location>
        <begin position="1"/>
        <end position="645"/>
    </location>
</feature>
<feature type="splice variant" id="VSP_023574" description="In isoform 2." evidence="12">
    <original>GSNSISVRAFLDEDDMSL</original>
    <variation>VEMRFHRIDQAGLELLTS</variation>
    <location>
        <begin position="631"/>
        <end position="648"/>
    </location>
</feature>
<feature type="splice variant" id="VSP_023575" description="In isoform 2." evidence="12">
    <location>
        <begin position="649"/>
        <end position="938"/>
    </location>
</feature>
<feature type="sequence variant" id="VAR_083604" description="In MCPH16; uncertain significance; dbSNP:rs986142623." evidence="9">
    <original>A</original>
    <variation>V</variation>
    <location>
        <position position="8"/>
    </location>
</feature>
<feature type="sequence variant" id="VAR_083605" description="In MCPH16; uncertain significance." evidence="9">
    <original>A</original>
    <variation>G</variation>
    <location>
        <position position="27"/>
    </location>
</feature>
<feature type="sequence variant" id="VAR_083606" description="In MCPH16." evidence="7 9">
    <original>A</original>
    <variation>P</variation>
    <location>
        <position position="109"/>
    </location>
</feature>
<feature type="sequence variant" id="VAR_031097" description="In dbSNP:rs1132375." evidence="4">
    <original>H</original>
    <variation>Y</variation>
    <location>
        <position position="122"/>
    </location>
</feature>
<feature type="sequence variant" id="VAR_031098" description="In dbSNP:rs7968520.">
    <original>Q</original>
    <variation>E</variation>
    <location>
        <position position="148"/>
    </location>
</feature>
<feature type="sequence variant" id="VAR_083607" description="In MCPH16; dbSNP:rs1185537869." evidence="9">
    <original>G</original>
    <variation>W</variation>
    <location>
        <position position="201"/>
    </location>
</feature>
<feature type="sequence variant" id="VAR_083608" description="In MCPH16; uncertain significance; severe loss of VRK1 nuclear localization in non-dividing cells." evidence="9">
    <original>V</original>
    <variation>G</variation>
    <location>
        <position position="229"/>
    </location>
</feature>
<feature type="sequence variant" id="VAR_083609" description="In MCPH16; uncertain significance; dbSNP:rs753596204." evidence="9">
    <location>
        <begin position="236"/>
        <end position="938"/>
    </location>
</feature>
<feature type="sequence variant" id="VAR_083610" description="In MCPH16; uncertain significance; dbSNP:rs761627940." evidence="9">
    <original>R</original>
    <variation>C</variation>
    <location>
        <position position="536"/>
    </location>
</feature>
<feature type="sequence variant" id="VAR_076205" description="In MCPH16; uncertain significance; dbSNP:rs863225465." evidence="6 9">
    <original>L</original>
    <variation>V</variation>
    <location>
        <position position="573"/>
    </location>
</feature>
<feature type="sequence variant" id="VAR_083611" description="In MCPH16; uncertain significance." evidence="7">
    <original>G</original>
    <variation>V</variation>
    <location>
        <position position="585"/>
    </location>
</feature>
<feature type="sequence variant" id="VAR_031099" description="In dbSNP:rs10781634." evidence="4 10">
    <original>R</original>
    <variation>H</variation>
    <location>
        <position position="720"/>
    </location>
</feature>
<feature type="sequence variant" id="VAR_083612" description="In MCPH16; dbSNP:rs201785518." evidence="6 9">
    <location>
        <begin position="782"/>
        <end position="938"/>
    </location>
</feature>
<feature type="sequence conflict" description="In Ref. 3; AAH43157." evidence="13" ref="3">
    <original>P</original>
    <variation>Q</variation>
    <location>
        <position position="266"/>
    </location>
</feature>
<feature type="sequence conflict" description="In Ref. 3; AAH43157." evidence="13" ref="3">
    <original>L</original>
    <variation>V</variation>
    <location>
        <position position="481"/>
    </location>
</feature>
<feature type="sequence conflict" description="In Ref. 3; AAH43157." evidence="13" ref="3">
    <original>S</original>
    <variation>N</variation>
    <location>
        <position position="647"/>
    </location>
</feature>
<feature type="sequence conflict" description="In Ref. 1; BAG52720." evidence="13" ref="1">
    <original>S</original>
    <variation>I</variation>
    <location>
        <position position="662"/>
    </location>
</feature>
<feature type="sequence conflict" description="In Ref. 1; BAG52720." evidence="13" ref="1">
    <original>E</original>
    <variation>K</variation>
    <location>
        <position position="680"/>
    </location>
</feature>
<feature type="sequence conflict" description="In Ref. 1; BAG51259." evidence="13" ref="1">
    <original>L</original>
    <variation>P</variation>
    <location>
        <position position="863"/>
    </location>
</feature>
<feature type="sequence conflict" description="In Ref. 1; BAG52720." evidence="13" ref="1">
    <original>G</original>
    <variation>A</variation>
    <location>
        <position position="891"/>
    </location>
</feature>